<name>RS9_COXBN</name>
<keyword id="KW-0687">Ribonucleoprotein</keyword>
<keyword id="KW-0689">Ribosomal protein</keyword>
<evidence type="ECO:0000255" key="1">
    <source>
        <dbReference type="HAMAP-Rule" id="MF_00532"/>
    </source>
</evidence>
<evidence type="ECO:0000305" key="2"/>
<feature type="chain" id="PRO_1000081811" description="Small ribosomal subunit protein uS9">
    <location>
        <begin position="1"/>
        <end position="139"/>
    </location>
</feature>
<reference key="1">
    <citation type="journal article" date="2009" name="Infect. Immun.">
        <title>Comparative genomics reveal extensive transposon-mediated genomic plasticity and diversity among potential effector proteins within the genus Coxiella.</title>
        <authorList>
            <person name="Beare P.A."/>
            <person name="Unsworth N."/>
            <person name="Andoh M."/>
            <person name="Voth D.E."/>
            <person name="Omsland A."/>
            <person name="Gilk S.D."/>
            <person name="Williams K.P."/>
            <person name="Sobral B.W."/>
            <person name="Kupko J.J. III"/>
            <person name="Porcella S.F."/>
            <person name="Samuel J.E."/>
            <person name="Heinzen R.A."/>
        </authorList>
    </citation>
    <scope>NUCLEOTIDE SEQUENCE [LARGE SCALE GENOMIC DNA]</scope>
    <source>
        <strain>Dugway 5J108-111</strain>
    </source>
</reference>
<gene>
    <name evidence="1" type="primary">rpsI</name>
    <name type="ordered locus">CBUD_0253</name>
</gene>
<organism>
    <name type="scientific">Coxiella burnetii (strain Dugway 5J108-111)</name>
    <dbReference type="NCBI Taxonomy" id="434922"/>
    <lineage>
        <taxon>Bacteria</taxon>
        <taxon>Pseudomonadati</taxon>
        <taxon>Pseudomonadota</taxon>
        <taxon>Gammaproteobacteria</taxon>
        <taxon>Legionellales</taxon>
        <taxon>Coxiellaceae</taxon>
        <taxon>Coxiella</taxon>
    </lineage>
</organism>
<accession>A9KBY1</accession>
<sequence length="139" mass="15304">MAQAAKKQNLGTGRRKTSSARVFLRSGTGQIIINGLPLDEYFGRETARMVVRQPLVKLDVQSRFDVYATVQGGGDSGQAGAIRHGITRALIQYDEEGGEGGTWRSTLRKAGFVTRDPRMVERKKVGLHGARRGTQFSKR</sequence>
<protein>
    <recommendedName>
        <fullName evidence="1">Small ribosomal subunit protein uS9</fullName>
    </recommendedName>
    <alternativeName>
        <fullName evidence="2">30S ribosomal protein S9</fullName>
    </alternativeName>
</protein>
<proteinExistence type="inferred from homology"/>
<comment type="similarity">
    <text evidence="1">Belongs to the universal ribosomal protein uS9 family.</text>
</comment>
<dbReference type="EMBL" id="CP000733">
    <property type="protein sequence ID" value="ABS77038.1"/>
    <property type="molecule type" value="Genomic_DNA"/>
</dbReference>
<dbReference type="RefSeq" id="WP_005773029.1">
    <property type="nucleotide sequence ID" value="NC_009727.1"/>
</dbReference>
<dbReference type="SMR" id="A9KBY1"/>
<dbReference type="KEGG" id="cbd:CBUD_0253"/>
<dbReference type="HOGENOM" id="CLU_046483_2_1_6"/>
<dbReference type="Proteomes" id="UP000008555">
    <property type="component" value="Chromosome"/>
</dbReference>
<dbReference type="GO" id="GO:0022627">
    <property type="term" value="C:cytosolic small ribosomal subunit"/>
    <property type="evidence" value="ECO:0007669"/>
    <property type="project" value="TreeGrafter"/>
</dbReference>
<dbReference type="GO" id="GO:0003723">
    <property type="term" value="F:RNA binding"/>
    <property type="evidence" value="ECO:0007669"/>
    <property type="project" value="TreeGrafter"/>
</dbReference>
<dbReference type="GO" id="GO:0003735">
    <property type="term" value="F:structural constituent of ribosome"/>
    <property type="evidence" value="ECO:0007669"/>
    <property type="project" value="InterPro"/>
</dbReference>
<dbReference type="GO" id="GO:0006412">
    <property type="term" value="P:translation"/>
    <property type="evidence" value="ECO:0007669"/>
    <property type="project" value="UniProtKB-UniRule"/>
</dbReference>
<dbReference type="FunFam" id="3.30.230.10:FF:000001">
    <property type="entry name" value="30S ribosomal protein S9"/>
    <property type="match status" value="1"/>
</dbReference>
<dbReference type="Gene3D" id="3.30.230.10">
    <property type="match status" value="1"/>
</dbReference>
<dbReference type="HAMAP" id="MF_00532_B">
    <property type="entry name" value="Ribosomal_uS9_B"/>
    <property type="match status" value="1"/>
</dbReference>
<dbReference type="InterPro" id="IPR020568">
    <property type="entry name" value="Ribosomal_Su5_D2-typ_SF"/>
</dbReference>
<dbReference type="InterPro" id="IPR000754">
    <property type="entry name" value="Ribosomal_uS9"/>
</dbReference>
<dbReference type="InterPro" id="IPR023035">
    <property type="entry name" value="Ribosomal_uS9_bac/plastid"/>
</dbReference>
<dbReference type="InterPro" id="IPR020574">
    <property type="entry name" value="Ribosomal_uS9_CS"/>
</dbReference>
<dbReference type="InterPro" id="IPR014721">
    <property type="entry name" value="Ribsml_uS5_D2-typ_fold_subgr"/>
</dbReference>
<dbReference type="NCBIfam" id="NF001099">
    <property type="entry name" value="PRK00132.1"/>
    <property type="match status" value="1"/>
</dbReference>
<dbReference type="PANTHER" id="PTHR21569">
    <property type="entry name" value="RIBOSOMAL PROTEIN S9"/>
    <property type="match status" value="1"/>
</dbReference>
<dbReference type="PANTHER" id="PTHR21569:SF1">
    <property type="entry name" value="SMALL RIBOSOMAL SUBUNIT PROTEIN US9M"/>
    <property type="match status" value="1"/>
</dbReference>
<dbReference type="Pfam" id="PF00380">
    <property type="entry name" value="Ribosomal_S9"/>
    <property type="match status" value="1"/>
</dbReference>
<dbReference type="SUPFAM" id="SSF54211">
    <property type="entry name" value="Ribosomal protein S5 domain 2-like"/>
    <property type="match status" value="1"/>
</dbReference>
<dbReference type="PROSITE" id="PS00360">
    <property type="entry name" value="RIBOSOMAL_S9"/>
    <property type="match status" value="1"/>
</dbReference>